<sequence>MTKKIAVFPGSFDPFTNGHLDTVKRASRLFDEVVVAAMTNTSKKPLFSSEEKLALISESTAGLPNVKAMAAPKRLTVEFARSIGARFMIRGIRNVADFGYEADIATVNHDLDPEIETVFLLADKQYDALSSTIIKEVAAFGGDVHRFVPAPVEAALYAKLGDAHQTK</sequence>
<protein>
    <recommendedName>
        <fullName evidence="1">Phosphopantetheine adenylyltransferase</fullName>
        <ecNumber evidence="1">2.7.7.3</ecNumber>
    </recommendedName>
    <alternativeName>
        <fullName evidence="1">Dephospho-CoA pyrophosphorylase</fullName>
    </alternativeName>
    <alternativeName>
        <fullName evidence="1">Pantetheine-phosphate adenylyltransferase</fullName>
        <shortName evidence="1">PPAT</shortName>
    </alternativeName>
</protein>
<accession>B3WE28</accession>
<keyword id="KW-0067">ATP-binding</keyword>
<keyword id="KW-0173">Coenzyme A biosynthesis</keyword>
<keyword id="KW-0963">Cytoplasm</keyword>
<keyword id="KW-0460">Magnesium</keyword>
<keyword id="KW-0547">Nucleotide-binding</keyword>
<keyword id="KW-0548">Nucleotidyltransferase</keyword>
<keyword id="KW-0808">Transferase</keyword>
<reference key="1">
    <citation type="submission" date="2008-06" db="EMBL/GenBank/DDBJ databases">
        <title>Lactobacillus casei BL23 complete genome sequence.</title>
        <authorList>
            <person name="Maze A."/>
            <person name="Boel G."/>
            <person name="Bourand A."/>
            <person name="Loux V."/>
            <person name="Gibrat J.F."/>
            <person name="Zuniga M."/>
            <person name="Hartke A."/>
            <person name="Deutscher J."/>
        </authorList>
    </citation>
    <scope>NUCLEOTIDE SEQUENCE [LARGE SCALE GENOMIC DNA]</scope>
    <source>
        <strain>BL23</strain>
    </source>
</reference>
<comment type="function">
    <text evidence="1">Reversibly transfers an adenylyl group from ATP to 4'-phosphopantetheine, yielding dephospho-CoA (dPCoA) and pyrophosphate.</text>
</comment>
<comment type="catalytic activity">
    <reaction evidence="1">
        <text>(R)-4'-phosphopantetheine + ATP + H(+) = 3'-dephospho-CoA + diphosphate</text>
        <dbReference type="Rhea" id="RHEA:19801"/>
        <dbReference type="ChEBI" id="CHEBI:15378"/>
        <dbReference type="ChEBI" id="CHEBI:30616"/>
        <dbReference type="ChEBI" id="CHEBI:33019"/>
        <dbReference type="ChEBI" id="CHEBI:57328"/>
        <dbReference type="ChEBI" id="CHEBI:61723"/>
        <dbReference type="EC" id="2.7.7.3"/>
    </reaction>
</comment>
<comment type="cofactor">
    <cofactor evidence="1">
        <name>Mg(2+)</name>
        <dbReference type="ChEBI" id="CHEBI:18420"/>
    </cofactor>
</comment>
<comment type="pathway">
    <text evidence="1">Cofactor biosynthesis; coenzyme A biosynthesis; CoA from (R)-pantothenate: step 4/5.</text>
</comment>
<comment type="subunit">
    <text evidence="1">Homohexamer.</text>
</comment>
<comment type="subcellular location">
    <subcellularLocation>
        <location evidence="1">Cytoplasm</location>
    </subcellularLocation>
</comment>
<comment type="similarity">
    <text evidence="1">Belongs to the bacterial CoaD family.</text>
</comment>
<dbReference type="EC" id="2.7.7.3" evidence="1"/>
<dbReference type="EMBL" id="FM177140">
    <property type="protein sequence ID" value="CAQ66629.1"/>
    <property type="molecule type" value="Genomic_DNA"/>
</dbReference>
<dbReference type="SMR" id="B3WE28"/>
<dbReference type="KEGG" id="lcb:LCABL_15480"/>
<dbReference type="HOGENOM" id="CLU_100149_0_1_9"/>
<dbReference type="UniPathway" id="UPA00241">
    <property type="reaction ID" value="UER00355"/>
</dbReference>
<dbReference type="GO" id="GO:0005737">
    <property type="term" value="C:cytoplasm"/>
    <property type="evidence" value="ECO:0007669"/>
    <property type="project" value="UniProtKB-SubCell"/>
</dbReference>
<dbReference type="GO" id="GO:0005524">
    <property type="term" value="F:ATP binding"/>
    <property type="evidence" value="ECO:0007669"/>
    <property type="project" value="UniProtKB-KW"/>
</dbReference>
<dbReference type="GO" id="GO:0004595">
    <property type="term" value="F:pantetheine-phosphate adenylyltransferase activity"/>
    <property type="evidence" value="ECO:0007669"/>
    <property type="project" value="UniProtKB-UniRule"/>
</dbReference>
<dbReference type="GO" id="GO:0015937">
    <property type="term" value="P:coenzyme A biosynthetic process"/>
    <property type="evidence" value="ECO:0007669"/>
    <property type="project" value="UniProtKB-UniRule"/>
</dbReference>
<dbReference type="CDD" id="cd02163">
    <property type="entry name" value="PPAT"/>
    <property type="match status" value="1"/>
</dbReference>
<dbReference type="Gene3D" id="3.40.50.620">
    <property type="entry name" value="HUPs"/>
    <property type="match status" value="1"/>
</dbReference>
<dbReference type="HAMAP" id="MF_00151">
    <property type="entry name" value="PPAT_bact"/>
    <property type="match status" value="1"/>
</dbReference>
<dbReference type="InterPro" id="IPR004821">
    <property type="entry name" value="Cyt_trans-like"/>
</dbReference>
<dbReference type="InterPro" id="IPR001980">
    <property type="entry name" value="PPAT"/>
</dbReference>
<dbReference type="InterPro" id="IPR014729">
    <property type="entry name" value="Rossmann-like_a/b/a_fold"/>
</dbReference>
<dbReference type="NCBIfam" id="TIGR01510">
    <property type="entry name" value="coaD_prev_kdtB"/>
    <property type="match status" value="1"/>
</dbReference>
<dbReference type="NCBIfam" id="TIGR00125">
    <property type="entry name" value="cyt_tran_rel"/>
    <property type="match status" value="1"/>
</dbReference>
<dbReference type="PANTHER" id="PTHR21342">
    <property type="entry name" value="PHOSPHOPANTETHEINE ADENYLYLTRANSFERASE"/>
    <property type="match status" value="1"/>
</dbReference>
<dbReference type="PANTHER" id="PTHR21342:SF1">
    <property type="entry name" value="PHOSPHOPANTETHEINE ADENYLYLTRANSFERASE"/>
    <property type="match status" value="1"/>
</dbReference>
<dbReference type="Pfam" id="PF01467">
    <property type="entry name" value="CTP_transf_like"/>
    <property type="match status" value="1"/>
</dbReference>
<dbReference type="PRINTS" id="PR01020">
    <property type="entry name" value="LPSBIOSNTHSS"/>
</dbReference>
<dbReference type="SUPFAM" id="SSF52374">
    <property type="entry name" value="Nucleotidylyl transferase"/>
    <property type="match status" value="1"/>
</dbReference>
<feature type="chain" id="PRO_1000096806" description="Phosphopantetheine adenylyltransferase">
    <location>
        <begin position="1"/>
        <end position="167"/>
    </location>
</feature>
<feature type="binding site" evidence="1">
    <location>
        <begin position="11"/>
        <end position="12"/>
    </location>
    <ligand>
        <name>ATP</name>
        <dbReference type="ChEBI" id="CHEBI:30616"/>
    </ligand>
</feature>
<feature type="binding site" evidence="1">
    <location>
        <position position="11"/>
    </location>
    <ligand>
        <name>substrate</name>
    </ligand>
</feature>
<feature type="binding site" evidence="1">
    <location>
        <position position="19"/>
    </location>
    <ligand>
        <name>ATP</name>
        <dbReference type="ChEBI" id="CHEBI:30616"/>
    </ligand>
</feature>
<feature type="binding site" evidence="1">
    <location>
        <position position="43"/>
    </location>
    <ligand>
        <name>substrate</name>
    </ligand>
</feature>
<feature type="binding site" evidence="1">
    <location>
        <position position="76"/>
    </location>
    <ligand>
        <name>substrate</name>
    </ligand>
</feature>
<feature type="binding site" evidence="1">
    <location>
        <position position="90"/>
    </location>
    <ligand>
        <name>substrate</name>
    </ligand>
</feature>
<feature type="binding site" evidence="1">
    <location>
        <begin position="91"/>
        <end position="93"/>
    </location>
    <ligand>
        <name>ATP</name>
        <dbReference type="ChEBI" id="CHEBI:30616"/>
    </ligand>
</feature>
<feature type="binding site" evidence="1">
    <location>
        <position position="101"/>
    </location>
    <ligand>
        <name>ATP</name>
        <dbReference type="ChEBI" id="CHEBI:30616"/>
    </ligand>
</feature>
<feature type="binding site" evidence="1">
    <location>
        <begin position="126"/>
        <end position="132"/>
    </location>
    <ligand>
        <name>ATP</name>
        <dbReference type="ChEBI" id="CHEBI:30616"/>
    </ligand>
</feature>
<feature type="site" description="Transition state stabilizer" evidence="1">
    <location>
        <position position="19"/>
    </location>
</feature>
<proteinExistence type="inferred from homology"/>
<organism>
    <name type="scientific">Lacticaseibacillus casei (strain BL23)</name>
    <name type="common">Lactobacillus casei</name>
    <dbReference type="NCBI Taxonomy" id="543734"/>
    <lineage>
        <taxon>Bacteria</taxon>
        <taxon>Bacillati</taxon>
        <taxon>Bacillota</taxon>
        <taxon>Bacilli</taxon>
        <taxon>Lactobacillales</taxon>
        <taxon>Lactobacillaceae</taxon>
        <taxon>Lacticaseibacillus</taxon>
    </lineage>
</organism>
<name>COAD_LACCB</name>
<gene>
    <name evidence="1" type="primary">coaD</name>
    <name type="ordered locus">LCABL_15480</name>
</gene>
<evidence type="ECO:0000255" key="1">
    <source>
        <dbReference type="HAMAP-Rule" id="MF_00151"/>
    </source>
</evidence>